<geneLocation type="mitochondrion"/>
<comment type="function">
    <text evidence="1">Core subunit of the mitochondrial membrane respiratory chain NADH dehydrogenase (Complex I) that is believed to belong to the minimal assembly required for catalysis. Complex I functions in the transfer of electrons from NADH to the respiratory chain. The immediate electron acceptor for the enzyme is believed to be ubiquinone (By similarity).</text>
</comment>
<comment type="catalytic activity">
    <reaction>
        <text>a ubiquinone + NADH + 5 H(+)(in) = a ubiquinol + NAD(+) + 4 H(+)(out)</text>
        <dbReference type="Rhea" id="RHEA:29091"/>
        <dbReference type="Rhea" id="RHEA-COMP:9565"/>
        <dbReference type="Rhea" id="RHEA-COMP:9566"/>
        <dbReference type="ChEBI" id="CHEBI:15378"/>
        <dbReference type="ChEBI" id="CHEBI:16389"/>
        <dbReference type="ChEBI" id="CHEBI:17976"/>
        <dbReference type="ChEBI" id="CHEBI:57540"/>
        <dbReference type="ChEBI" id="CHEBI:57945"/>
        <dbReference type="EC" id="7.1.1.2"/>
    </reaction>
</comment>
<comment type="subcellular location">
    <subcellularLocation>
        <location evidence="1">Mitochondrion membrane</location>
        <topology evidence="1">Multi-pass membrane protein</topology>
    </subcellularLocation>
</comment>
<comment type="similarity">
    <text evidence="3">Belongs to the complex I subunit 4 family.</text>
</comment>
<accession>O03702</accession>
<proteinExistence type="inferred from homology"/>
<evidence type="ECO:0000250" key="1"/>
<evidence type="ECO:0000255" key="2"/>
<evidence type="ECO:0000305" key="3"/>
<dbReference type="EC" id="7.1.1.2"/>
<dbReference type="EMBL" id="U41880">
    <property type="protein sequence ID" value="AAB46637.1"/>
    <property type="molecule type" value="Genomic_DNA"/>
</dbReference>
<dbReference type="SMR" id="O03702"/>
<dbReference type="GO" id="GO:0031966">
    <property type="term" value="C:mitochondrial membrane"/>
    <property type="evidence" value="ECO:0007669"/>
    <property type="project" value="UniProtKB-SubCell"/>
</dbReference>
<dbReference type="GO" id="GO:0008137">
    <property type="term" value="F:NADH dehydrogenase (ubiquinone) activity"/>
    <property type="evidence" value="ECO:0007669"/>
    <property type="project" value="UniProtKB-EC"/>
</dbReference>
<dbReference type="GO" id="GO:0048039">
    <property type="term" value="F:ubiquinone binding"/>
    <property type="evidence" value="ECO:0007669"/>
    <property type="project" value="TreeGrafter"/>
</dbReference>
<dbReference type="GO" id="GO:0042773">
    <property type="term" value="P:ATP synthesis coupled electron transport"/>
    <property type="evidence" value="ECO:0007669"/>
    <property type="project" value="InterPro"/>
</dbReference>
<dbReference type="GO" id="GO:0015990">
    <property type="term" value="P:electron transport coupled proton transport"/>
    <property type="evidence" value="ECO:0007669"/>
    <property type="project" value="TreeGrafter"/>
</dbReference>
<dbReference type="InterPro" id="IPR003918">
    <property type="entry name" value="NADH_UbQ_OxRdtase"/>
</dbReference>
<dbReference type="InterPro" id="IPR001750">
    <property type="entry name" value="ND/Mrp_TM"/>
</dbReference>
<dbReference type="PANTHER" id="PTHR43507">
    <property type="entry name" value="NADH-UBIQUINONE OXIDOREDUCTASE CHAIN 4"/>
    <property type="match status" value="1"/>
</dbReference>
<dbReference type="PANTHER" id="PTHR43507:SF20">
    <property type="entry name" value="NADH-UBIQUINONE OXIDOREDUCTASE CHAIN 4"/>
    <property type="match status" value="1"/>
</dbReference>
<dbReference type="Pfam" id="PF00361">
    <property type="entry name" value="Proton_antipo_M"/>
    <property type="match status" value="1"/>
</dbReference>
<keyword id="KW-0249">Electron transport</keyword>
<keyword id="KW-0472">Membrane</keyword>
<keyword id="KW-0496">Mitochondrion</keyword>
<keyword id="KW-0520">NAD</keyword>
<keyword id="KW-0679">Respiratory chain</keyword>
<keyword id="KW-1278">Translocase</keyword>
<keyword id="KW-0812">Transmembrane</keyword>
<keyword id="KW-1133">Transmembrane helix</keyword>
<keyword id="KW-0813">Transport</keyword>
<keyword id="KW-0830">Ubiquinone</keyword>
<gene>
    <name type="primary">MT-ND4</name>
    <name type="synonym">MTND4</name>
    <name type="synonym">NADH4</name>
    <name type="synonym">ND4</name>
</gene>
<sequence>PIAGSMVLAAILLKLGGYGIIRMMQILPTTKTDLFLPFIVLALWGAILANLTCLQQTDLKSLIAYSSISHMGLVVAAIIIQTPWGLSGAMALMIAHGFTSSALFCLANTTYERTHTRILILTRGFHNILPMATTWWLVTNLMNIAIPPSMNFTGELLIMSALFNWCPTTIIMLGLSMLITASYSLHMFLSTQMGPTMLNNQTEPMHSREHLLIALHLAPLLMISLKPELVI</sequence>
<name>NU4M_CROAD</name>
<reference key="1">
    <citation type="journal article" date="1996" name="Copeia">
        <title>Crotaline intergeneric relationships based on mitochondrial DNA sequence data.</title>
        <authorList>
            <person name="Kraus F."/>
            <person name="Mink D.G."/>
            <person name="Brown W.M."/>
        </authorList>
    </citation>
    <scope>NUCLEOTIDE SEQUENCE [GENOMIC DNA]</scope>
</reference>
<organism>
    <name type="scientific">Crotalus adamanteus</name>
    <name type="common">Eastern diamondback rattlesnake</name>
    <dbReference type="NCBI Taxonomy" id="8729"/>
    <lineage>
        <taxon>Eukaryota</taxon>
        <taxon>Metazoa</taxon>
        <taxon>Chordata</taxon>
        <taxon>Craniata</taxon>
        <taxon>Vertebrata</taxon>
        <taxon>Euteleostomi</taxon>
        <taxon>Lepidosauria</taxon>
        <taxon>Squamata</taxon>
        <taxon>Bifurcata</taxon>
        <taxon>Unidentata</taxon>
        <taxon>Episquamata</taxon>
        <taxon>Toxicofera</taxon>
        <taxon>Serpentes</taxon>
        <taxon>Colubroidea</taxon>
        <taxon>Viperidae</taxon>
        <taxon>Crotalinae</taxon>
        <taxon>Crotalus</taxon>
    </lineage>
</organism>
<feature type="chain" id="PRO_0000117923" description="NADH-ubiquinone oxidoreductase chain 4">
    <location>
        <begin position="1" status="less than"/>
        <end position="231" status="greater than"/>
    </location>
</feature>
<feature type="transmembrane region" description="Helical" evidence="2">
    <location>
        <begin position="1"/>
        <end position="21"/>
    </location>
</feature>
<feature type="transmembrane region" description="Helical" evidence="2">
    <location>
        <begin position="34"/>
        <end position="54"/>
    </location>
</feature>
<feature type="transmembrane region" description="Helical" evidence="2">
    <location>
        <begin position="63"/>
        <end position="85"/>
    </location>
</feature>
<feature type="transmembrane region" description="Helical" evidence="2">
    <location>
        <begin position="89"/>
        <end position="111"/>
    </location>
</feature>
<feature type="transmembrane region" description="Helical" evidence="2">
    <location>
        <begin position="128"/>
        <end position="148"/>
    </location>
</feature>
<feature type="transmembrane region" description="Helical" evidence="2">
    <location>
        <begin position="156"/>
        <end position="176"/>
    </location>
</feature>
<feature type="transmembrane region" description="Helical" evidence="2">
    <location>
        <begin position="211"/>
        <end position="231"/>
    </location>
</feature>
<feature type="non-terminal residue">
    <location>
        <position position="1"/>
    </location>
</feature>
<feature type="non-terminal residue">
    <location>
        <position position="231"/>
    </location>
</feature>
<protein>
    <recommendedName>
        <fullName>NADH-ubiquinone oxidoreductase chain 4</fullName>
        <ecNumber>7.1.1.2</ecNumber>
    </recommendedName>
    <alternativeName>
        <fullName>NADH dehydrogenase subunit 4</fullName>
    </alternativeName>
</protein>